<feature type="chain" id="PRO_1000124991" description="Putative competence-damage inducible protein">
    <location>
        <begin position="1"/>
        <end position="418"/>
    </location>
</feature>
<accession>B8ZNU8</accession>
<gene>
    <name evidence="1" type="primary">cinA</name>
    <name type="ordered locus">SPN23F19630</name>
</gene>
<organism>
    <name type="scientific">Streptococcus pneumoniae (strain ATCC 700669 / Spain 23F-1)</name>
    <dbReference type="NCBI Taxonomy" id="561276"/>
    <lineage>
        <taxon>Bacteria</taxon>
        <taxon>Bacillati</taxon>
        <taxon>Bacillota</taxon>
        <taxon>Bacilli</taxon>
        <taxon>Lactobacillales</taxon>
        <taxon>Streptococcaceae</taxon>
        <taxon>Streptococcus</taxon>
    </lineage>
</organism>
<protein>
    <recommendedName>
        <fullName evidence="1">Putative competence-damage inducible protein</fullName>
    </recommendedName>
</protein>
<comment type="similarity">
    <text evidence="1">Belongs to the CinA family.</text>
</comment>
<proteinExistence type="inferred from homology"/>
<evidence type="ECO:0000255" key="1">
    <source>
        <dbReference type="HAMAP-Rule" id="MF_00226"/>
    </source>
</evidence>
<name>CINA_STRPJ</name>
<sequence length="418" mass="45047">MKAEIIAVGTEILTGQIVNTNAQFLSEKLAEIGVDVYFQTAVGDNEVRLLSLLEIASQRSSLVILTGGLGPTEDDLTKQTLAKFLGKALVFDPQAQEKLDIFFALRPDYARTPNNERQAQIVEGAIPLPNETGLAVGGKLEVDGVTYVVLPGPPSELKPMVLNQLLPKLMTGSKLYSRVLRFFGIGESQLVTILADLIDNQIDPTLAPYAKTGEVTLRLSTKASSQEEANQALDILENQILDCQTFEGISLRDFCYGYGEETSLASIVVEELKRQGKTIAAAESLTAGLFQATVANFSGASSIFKGGFVTYSLEEKSRMLDIPAKNLEEHGVVSEFTAQKMAEQARSKTQSDFGISLTGVAGPDSLEGHPVGTVFIGLAQEQGTEVIKVNIGGRSRADVRHIAVMHAFNLVRKALLSD</sequence>
<dbReference type="EMBL" id="FM211187">
    <property type="protein sequence ID" value="CAR69714.1"/>
    <property type="molecule type" value="Genomic_DNA"/>
</dbReference>
<dbReference type="RefSeq" id="WP_000642705.1">
    <property type="nucleotide sequence ID" value="NC_011900.1"/>
</dbReference>
<dbReference type="SMR" id="B8ZNU8"/>
<dbReference type="KEGG" id="sne:SPN23F19630"/>
<dbReference type="HOGENOM" id="CLU_030805_9_3_9"/>
<dbReference type="CDD" id="cd00885">
    <property type="entry name" value="cinA"/>
    <property type="match status" value="1"/>
</dbReference>
<dbReference type="Gene3D" id="3.30.70.2860">
    <property type="match status" value="1"/>
</dbReference>
<dbReference type="Gene3D" id="3.90.950.20">
    <property type="entry name" value="CinA-like"/>
    <property type="match status" value="1"/>
</dbReference>
<dbReference type="Gene3D" id="3.40.980.10">
    <property type="entry name" value="MoaB/Mog-like domain"/>
    <property type="match status" value="1"/>
</dbReference>
<dbReference type="HAMAP" id="MF_00226_B">
    <property type="entry name" value="CinA_B"/>
    <property type="match status" value="1"/>
</dbReference>
<dbReference type="InterPro" id="IPR050101">
    <property type="entry name" value="CinA"/>
</dbReference>
<dbReference type="InterPro" id="IPR036653">
    <property type="entry name" value="CinA-like_C"/>
</dbReference>
<dbReference type="InterPro" id="IPR008136">
    <property type="entry name" value="CinA_C"/>
</dbReference>
<dbReference type="InterPro" id="IPR041424">
    <property type="entry name" value="CinA_KH"/>
</dbReference>
<dbReference type="InterPro" id="IPR008135">
    <property type="entry name" value="Competence-induced_CinA"/>
</dbReference>
<dbReference type="InterPro" id="IPR036425">
    <property type="entry name" value="MoaB/Mog-like_dom_sf"/>
</dbReference>
<dbReference type="InterPro" id="IPR001453">
    <property type="entry name" value="MoaB/Mog_dom"/>
</dbReference>
<dbReference type="NCBIfam" id="TIGR00200">
    <property type="entry name" value="cinA_nterm"/>
    <property type="match status" value="1"/>
</dbReference>
<dbReference type="NCBIfam" id="TIGR00199">
    <property type="entry name" value="PncC_domain"/>
    <property type="match status" value="1"/>
</dbReference>
<dbReference type="NCBIfam" id="NF001813">
    <property type="entry name" value="PRK00549.1"/>
    <property type="match status" value="1"/>
</dbReference>
<dbReference type="PANTHER" id="PTHR13939">
    <property type="entry name" value="NICOTINAMIDE-NUCLEOTIDE AMIDOHYDROLASE PNCC"/>
    <property type="match status" value="1"/>
</dbReference>
<dbReference type="PANTHER" id="PTHR13939:SF0">
    <property type="entry name" value="NMN AMIDOHYDROLASE-LIKE PROTEIN YFAY"/>
    <property type="match status" value="1"/>
</dbReference>
<dbReference type="Pfam" id="PF02464">
    <property type="entry name" value="CinA"/>
    <property type="match status" value="1"/>
</dbReference>
<dbReference type="Pfam" id="PF18146">
    <property type="entry name" value="CinA_KH"/>
    <property type="match status" value="1"/>
</dbReference>
<dbReference type="Pfam" id="PF00994">
    <property type="entry name" value="MoCF_biosynth"/>
    <property type="match status" value="1"/>
</dbReference>
<dbReference type="PIRSF" id="PIRSF006728">
    <property type="entry name" value="CinA"/>
    <property type="match status" value="1"/>
</dbReference>
<dbReference type="SMART" id="SM00852">
    <property type="entry name" value="MoCF_biosynth"/>
    <property type="match status" value="1"/>
</dbReference>
<dbReference type="SUPFAM" id="SSF142433">
    <property type="entry name" value="CinA-like"/>
    <property type="match status" value="1"/>
</dbReference>
<dbReference type="SUPFAM" id="SSF53218">
    <property type="entry name" value="Molybdenum cofactor biosynthesis proteins"/>
    <property type="match status" value="1"/>
</dbReference>
<reference key="1">
    <citation type="journal article" date="2009" name="J. Bacteriol.">
        <title>Role of conjugative elements in the evolution of the multidrug-resistant pandemic clone Streptococcus pneumoniae Spain23F ST81.</title>
        <authorList>
            <person name="Croucher N.J."/>
            <person name="Walker D."/>
            <person name="Romero P."/>
            <person name="Lennard N."/>
            <person name="Paterson G.K."/>
            <person name="Bason N.C."/>
            <person name="Mitchell A.M."/>
            <person name="Quail M.A."/>
            <person name="Andrew P.W."/>
            <person name="Parkhill J."/>
            <person name="Bentley S.D."/>
            <person name="Mitchell T.J."/>
        </authorList>
    </citation>
    <scope>NUCLEOTIDE SEQUENCE [LARGE SCALE GENOMIC DNA]</scope>
    <source>
        <strain>ATCC 700669 / Spain 23F-1</strain>
    </source>
</reference>